<proteinExistence type="inferred from homology"/>
<gene>
    <name evidence="1" type="primary">ybeY</name>
    <name type="ordered locus">Mjls_3466</name>
</gene>
<feature type="chain" id="PRO_1000000729" description="Endoribonuclease YbeY">
    <location>
        <begin position="1"/>
        <end position="177"/>
    </location>
</feature>
<feature type="binding site" evidence="1">
    <location>
        <position position="118"/>
    </location>
    <ligand>
        <name>Zn(2+)</name>
        <dbReference type="ChEBI" id="CHEBI:29105"/>
        <note>catalytic</note>
    </ligand>
</feature>
<feature type="binding site" evidence="1">
    <location>
        <position position="122"/>
    </location>
    <ligand>
        <name>Zn(2+)</name>
        <dbReference type="ChEBI" id="CHEBI:29105"/>
        <note>catalytic</note>
    </ligand>
</feature>
<feature type="binding site" evidence="1">
    <location>
        <position position="128"/>
    </location>
    <ligand>
        <name>Zn(2+)</name>
        <dbReference type="ChEBI" id="CHEBI:29105"/>
        <note>catalytic</note>
    </ligand>
</feature>
<evidence type="ECO:0000255" key="1">
    <source>
        <dbReference type="HAMAP-Rule" id="MF_00009"/>
    </source>
</evidence>
<accession>A3Q267</accession>
<organism>
    <name type="scientific">Mycobacterium sp. (strain JLS)</name>
    <dbReference type="NCBI Taxonomy" id="164757"/>
    <lineage>
        <taxon>Bacteria</taxon>
        <taxon>Bacillati</taxon>
        <taxon>Actinomycetota</taxon>
        <taxon>Actinomycetes</taxon>
        <taxon>Mycobacteriales</taxon>
        <taxon>Mycobacteriaceae</taxon>
        <taxon>Mycobacterium</taxon>
    </lineage>
</organism>
<keyword id="KW-0963">Cytoplasm</keyword>
<keyword id="KW-0255">Endonuclease</keyword>
<keyword id="KW-0378">Hydrolase</keyword>
<keyword id="KW-0479">Metal-binding</keyword>
<keyword id="KW-0540">Nuclease</keyword>
<keyword id="KW-0690">Ribosome biogenesis</keyword>
<keyword id="KW-0698">rRNA processing</keyword>
<keyword id="KW-0862">Zinc</keyword>
<sequence>MSIEVSNESGIDVSEEELISVARFVIEKMNVNPAAELSMVLLDTSSMADLHMRWMDLPGPTDVMSFPMDELEPGGRPDAPEPGPAMLGDIVLCPEFAAKQAETAGHSLGHELALLTVHGVLHLLGYDHAEPDEEKEMFALQRELLEEWVAHQVEAYHLDRQTERDRRLLDKSRYFDE</sequence>
<reference key="1">
    <citation type="submission" date="2007-02" db="EMBL/GenBank/DDBJ databases">
        <title>Complete sequence of Mycobacterium sp. JLS.</title>
        <authorList>
            <consortium name="US DOE Joint Genome Institute"/>
            <person name="Copeland A."/>
            <person name="Lucas S."/>
            <person name="Lapidus A."/>
            <person name="Barry K."/>
            <person name="Detter J.C."/>
            <person name="Glavina del Rio T."/>
            <person name="Hammon N."/>
            <person name="Israni S."/>
            <person name="Dalin E."/>
            <person name="Tice H."/>
            <person name="Pitluck S."/>
            <person name="Chain P."/>
            <person name="Malfatti S."/>
            <person name="Shin M."/>
            <person name="Vergez L."/>
            <person name="Schmutz J."/>
            <person name="Larimer F."/>
            <person name="Land M."/>
            <person name="Hauser L."/>
            <person name="Kyrpides N."/>
            <person name="Mikhailova N."/>
            <person name="Miller C.D."/>
            <person name="Anderson A.J."/>
            <person name="Sims R.C."/>
            <person name="Richardson P."/>
        </authorList>
    </citation>
    <scope>NUCLEOTIDE SEQUENCE [LARGE SCALE GENOMIC DNA]</scope>
    <source>
        <strain>JLS</strain>
    </source>
</reference>
<protein>
    <recommendedName>
        <fullName evidence="1">Endoribonuclease YbeY</fullName>
        <ecNumber evidence="1">3.1.-.-</ecNumber>
    </recommendedName>
</protein>
<dbReference type="EC" id="3.1.-.-" evidence="1"/>
<dbReference type="EMBL" id="CP000580">
    <property type="protein sequence ID" value="ABN99244.1"/>
    <property type="molecule type" value="Genomic_DNA"/>
</dbReference>
<dbReference type="SMR" id="A3Q267"/>
<dbReference type="KEGG" id="mjl:Mjls_3466"/>
<dbReference type="HOGENOM" id="CLU_106710_3_2_11"/>
<dbReference type="BioCyc" id="MSP164757:G1G8C-3496-MONOMER"/>
<dbReference type="GO" id="GO:0005737">
    <property type="term" value="C:cytoplasm"/>
    <property type="evidence" value="ECO:0007669"/>
    <property type="project" value="UniProtKB-SubCell"/>
</dbReference>
<dbReference type="GO" id="GO:0004222">
    <property type="term" value="F:metalloendopeptidase activity"/>
    <property type="evidence" value="ECO:0007669"/>
    <property type="project" value="InterPro"/>
</dbReference>
<dbReference type="GO" id="GO:0004521">
    <property type="term" value="F:RNA endonuclease activity"/>
    <property type="evidence" value="ECO:0007669"/>
    <property type="project" value="UniProtKB-UniRule"/>
</dbReference>
<dbReference type="GO" id="GO:0008270">
    <property type="term" value="F:zinc ion binding"/>
    <property type="evidence" value="ECO:0007669"/>
    <property type="project" value="UniProtKB-UniRule"/>
</dbReference>
<dbReference type="GO" id="GO:0006364">
    <property type="term" value="P:rRNA processing"/>
    <property type="evidence" value="ECO:0007669"/>
    <property type="project" value="UniProtKB-UniRule"/>
</dbReference>
<dbReference type="Gene3D" id="3.40.390.30">
    <property type="entry name" value="Metalloproteases ('zincins'), catalytic domain"/>
    <property type="match status" value="1"/>
</dbReference>
<dbReference type="HAMAP" id="MF_00009">
    <property type="entry name" value="Endoribonucl_YbeY"/>
    <property type="match status" value="1"/>
</dbReference>
<dbReference type="InterPro" id="IPR023091">
    <property type="entry name" value="MetalPrtase_cat_dom_sf_prd"/>
</dbReference>
<dbReference type="InterPro" id="IPR002036">
    <property type="entry name" value="YbeY"/>
</dbReference>
<dbReference type="InterPro" id="IPR020549">
    <property type="entry name" value="YbeY_CS"/>
</dbReference>
<dbReference type="NCBIfam" id="TIGR00043">
    <property type="entry name" value="rRNA maturation RNase YbeY"/>
    <property type="match status" value="1"/>
</dbReference>
<dbReference type="PANTHER" id="PTHR46986">
    <property type="entry name" value="ENDORIBONUCLEASE YBEY, CHLOROPLASTIC"/>
    <property type="match status" value="1"/>
</dbReference>
<dbReference type="PANTHER" id="PTHR46986:SF1">
    <property type="entry name" value="ENDORIBONUCLEASE YBEY, CHLOROPLASTIC"/>
    <property type="match status" value="1"/>
</dbReference>
<dbReference type="Pfam" id="PF02130">
    <property type="entry name" value="YbeY"/>
    <property type="match status" value="1"/>
</dbReference>
<dbReference type="SUPFAM" id="SSF55486">
    <property type="entry name" value="Metalloproteases ('zincins'), catalytic domain"/>
    <property type="match status" value="1"/>
</dbReference>
<dbReference type="PROSITE" id="PS01306">
    <property type="entry name" value="UPF0054"/>
    <property type="match status" value="1"/>
</dbReference>
<name>YBEY_MYCSJ</name>
<comment type="function">
    <text evidence="1">Single strand-specific metallo-endoribonuclease involved in late-stage 70S ribosome quality control and in maturation of the 3' terminus of the 16S rRNA.</text>
</comment>
<comment type="cofactor">
    <cofactor evidence="1">
        <name>Zn(2+)</name>
        <dbReference type="ChEBI" id="CHEBI:29105"/>
    </cofactor>
    <text evidence="1">Binds 1 zinc ion.</text>
</comment>
<comment type="subcellular location">
    <subcellularLocation>
        <location evidence="1">Cytoplasm</location>
    </subcellularLocation>
</comment>
<comment type="similarity">
    <text evidence="1">Belongs to the endoribonuclease YbeY family.</text>
</comment>